<name>YE1M_HERAU</name>
<reference key="1">
    <citation type="submission" date="1990-11" db="EMBL/GenBank/DDBJ databases">
        <authorList>
            <person name="Erdmann D."/>
            <person name="Kroeger M."/>
        </authorList>
    </citation>
    <scope>NUCLEOTIDE SEQUENCE [GENOMIC DNA]</scope>
    <source>
        <strain>HPG24</strain>
    </source>
</reference>
<reference key="2">
    <citation type="journal article" date="1995" name="Gene">
        <title>Organization and gene expression within restriction-modification systems of Herpetosiphon giganteus.</title>
        <authorList>
            <person name="Kroeger M."/>
            <person name="Blum E."/>
            <person name="Deppe E."/>
            <person name="Duesterhoeft A."/>
            <person name="Erdmann D."/>
            <person name="Kilz S."/>
            <person name="Meyer-Rogge S."/>
            <person name="Moestl D."/>
        </authorList>
    </citation>
    <scope>DISCUSSION OF SEQUENCE</scope>
</reference>
<keyword id="KW-0680">Restriction system</keyword>
<sequence>SMPPQVMVEINGMLNDGCTAFHEAKQVVEGNTIKIEVTTIRPKDAMCTQEISPFSTTIQVDAQLQPGEYTILVNDVAEALKL</sequence>
<organism>
    <name type="scientific">Herpetosiphon aurantiacus</name>
    <name type="common">Herpetosiphon giganteus</name>
    <dbReference type="NCBI Taxonomy" id="65"/>
    <lineage>
        <taxon>Bacteria</taxon>
        <taxon>Bacillati</taxon>
        <taxon>Chloroflexota</taxon>
        <taxon>Chloroflexia</taxon>
        <taxon>Herpetosiphonales</taxon>
        <taxon>Herpetosiphonaceae</taxon>
        <taxon>Herpetosiphon</taxon>
    </lineage>
</organism>
<proteinExistence type="predicted"/>
<feature type="chain" id="PRO_0000066200" description="Uncharacterized 10.2 kDa protein in HgiEIM 5'region">
    <location>
        <begin position="1" status="less than"/>
        <end position="82"/>
    </location>
</feature>
<feature type="non-terminal residue">
    <location>
        <position position="1"/>
    </location>
</feature>
<dbReference type="EMBL" id="X55142">
    <property type="protein sequence ID" value="CAA38943.1"/>
    <property type="molecule type" value="Genomic_DNA"/>
</dbReference>
<dbReference type="PIR" id="S22306">
    <property type="entry name" value="S22306"/>
</dbReference>
<dbReference type="GO" id="GO:0009307">
    <property type="term" value="P:DNA restriction-modification system"/>
    <property type="evidence" value="ECO:0007669"/>
    <property type="project" value="UniProtKB-KW"/>
</dbReference>
<protein>
    <recommendedName>
        <fullName>Uncharacterized 10.2 kDa protein in HgiEIM 5'region</fullName>
    </recommendedName>
    <alternativeName>
        <fullName>ORF11</fullName>
    </alternativeName>
    <alternativeName>
        <fullName>ORFC</fullName>
    </alternativeName>
</protein>
<comment type="function">
    <text>Could be a silencing control element for the regulation of the restriction system.</text>
</comment>
<accession>P25281</accession>